<comment type="function">
    <text evidence="1">Catalyzes the reversible transfer of the terminal phosphate group between ATP and AMP. Plays an important role in cellular energy homeostasis and in adenine nucleotide metabolism.</text>
</comment>
<comment type="catalytic activity">
    <reaction evidence="1">
        <text>AMP + ATP = 2 ADP</text>
        <dbReference type="Rhea" id="RHEA:12973"/>
        <dbReference type="ChEBI" id="CHEBI:30616"/>
        <dbReference type="ChEBI" id="CHEBI:456215"/>
        <dbReference type="ChEBI" id="CHEBI:456216"/>
        <dbReference type="EC" id="2.7.4.3"/>
    </reaction>
</comment>
<comment type="pathway">
    <text evidence="1">Purine metabolism; AMP biosynthesis via salvage pathway; AMP from ADP: step 1/1.</text>
</comment>
<comment type="subunit">
    <text evidence="1">Monomer.</text>
</comment>
<comment type="subcellular location">
    <subcellularLocation>
        <location evidence="1">Cytoplasm</location>
    </subcellularLocation>
</comment>
<comment type="domain">
    <text evidence="1">Consists of three domains, a large central CORE domain and two small peripheral domains, NMPbind and LID, which undergo movements during catalysis. The LID domain closes over the site of phosphoryl transfer upon ATP binding. Assembling and dissambling the active center during each catalytic cycle provides an effective means to prevent ATP hydrolysis. Some bacteria have evolved a zinc-coordinating structure that stabilizes the LID domain.</text>
</comment>
<comment type="similarity">
    <text evidence="1">Belongs to the adenylate kinase family.</text>
</comment>
<sequence length="215" mass="24030">MRLIILGAPGAGKGTQAEYLSSRFGIPHISTGDILRENVKNQTELGKKAKEYMDKGLLVPDEIVIEIVKNRLMQDDCKNGFLLDGFPRTIAQAEALEKVLADLGQKIDKVLNIEVPDEKILERMSGRRICKSCGASFHVVYRPPKKEGICDICGGQLYQREDDKEETVKKRLEVYHAQTQPLIEYYKNKGLLVTAVGQEEIADTTKEVLKALGVE</sequence>
<protein>
    <recommendedName>
        <fullName evidence="1">Adenylate kinase</fullName>
        <shortName evidence="1">AK</shortName>
        <ecNumber evidence="1">2.7.4.3</ecNumber>
    </recommendedName>
    <alternativeName>
        <fullName evidence="1">ATP-AMP transphosphorylase</fullName>
    </alternativeName>
    <alternativeName>
        <fullName evidence="1">ATP:AMP phosphotransferase</fullName>
    </alternativeName>
    <alternativeName>
        <fullName evidence="1">Adenylate monophosphate kinase</fullName>
    </alternativeName>
</protein>
<reference key="1">
    <citation type="submission" date="2007-04" db="EMBL/GenBank/DDBJ databases">
        <title>Genome sequence of the thermophilic hydrogen-producing bacterium Caldicellulosiruptor saccharolyticus DSM 8903.</title>
        <authorList>
            <person name="Copeland A."/>
            <person name="Lucas S."/>
            <person name="Lapidus A."/>
            <person name="Barry K."/>
            <person name="Detter J.C."/>
            <person name="Glavina del Rio T."/>
            <person name="Hammon N."/>
            <person name="Israni S."/>
            <person name="Dalin E."/>
            <person name="Tice H."/>
            <person name="Pitluck S."/>
            <person name="Kiss H."/>
            <person name="Brettin T."/>
            <person name="Bruce D."/>
            <person name="Han C."/>
            <person name="Schmutz J."/>
            <person name="Larimer F."/>
            <person name="Land M."/>
            <person name="Hauser L."/>
            <person name="Kyrpides N."/>
            <person name="Lykidis A."/>
            <person name="van de Werken H.J.G."/>
            <person name="Verhaart M.R.A."/>
            <person name="VanFossen A.L."/>
            <person name="Lewis D.L."/>
            <person name="Nichols J.D."/>
            <person name="Goorissen H.P."/>
            <person name="van Niel E.W.J."/>
            <person name="Stams F.J.M."/>
            <person name="Willquist K.U."/>
            <person name="Ward D.E."/>
            <person name="van der Oost J."/>
            <person name="Kelly R.M."/>
            <person name="Kengen S.M.W."/>
            <person name="Richardson P."/>
        </authorList>
    </citation>
    <scope>NUCLEOTIDE SEQUENCE [LARGE SCALE GENOMIC DNA]</scope>
    <source>
        <strain>ATCC 43494 / DSM 8903 / Tp8T 6331</strain>
    </source>
</reference>
<gene>
    <name evidence="1" type="primary">adk</name>
    <name type="ordered locus">Csac_2267</name>
</gene>
<name>KAD_CALS8</name>
<keyword id="KW-0067">ATP-binding</keyword>
<keyword id="KW-0963">Cytoplasm</keyword>
<keyword id="KW-0418">Kinase</keyword>
<keyword id="KW-0479">Metal-binding</keyword>
<keyword id="KW-0545">Nucleotide biosynthesis</keyword>
<keyword id="KW-0547">Nucleotide-binding</keyword>
<keyword id="KW-0808">Transferase</keyword>
<keyword id="KW-0862">Zinc</keyword>
<dbReference type="EC" id="2.7.4.3" evidence="1"/>
<dbReference type="EMBL" id="CP000679">
    <property type="protein sequence ID" value="ABP67845.1"/>
    <property type="molecule type" value="Genomic_DNA"/>
</dbReference>
<dbReference type="RefSeq" id="WP_011917771.1">
    <property type="nucleotide sequence ID" value="NC_009437.1"/>
</dbReference>
<dbReference type="SMR" id="A4XLR0"/>
<dbReference type="STRING" id="351627.Csac_2267"/>
<dbReference type="KEGG" id="csc:Csac_2267"/>
<dbReference type="eggNOG" id="COG0563">
    <property type="taxonomic scope" value="Bacteria"/>
</dbReference>
<dbReference type="HOGENOM" id="CLU_032354_1_2_9"/>
<dbReference type="OrthoDB" id="9805030at2"/>
<dbReference type="UniPathway" id="UPA00588">
    <property type="reaction ID" value="UER00649"/>
</dbReference>
<dbReference type="Proteomes" id="UP000000256">
    <property type="component" value="Chromosome"/>
</dbReference>
<dbReference type="GO" id="GO:0005737">
    <property type="term" value="C:cytoplasm"/>
    <property type="evidence" value="ECO:0007669"/>
    <property type="project" value="UniProtKB-SubCell"/>
</dbReference>
<dbReference type="GO" id="GO:0004017">
    <property type="term" value="F:adenylate kinase activity"/>
    <property type="evidence" value="ECO:0007669"/>
    <property type="project" value="UniProtKB-UniRule"/>
</dbReference>
<dbReference type="GO" id="GO:0005524">
    <property type="term" value="F:ATP binding"/>
    <property type="evidence" value="ECO:0007669"/>
    <property type="project" value="UniProtKB-UniRule"/>
</dbReference>
<dbReference type="GO" id="GO:0008270">
    <property type="term" value="F:zinc ion binding"/>
    <property type="evidence" value="ECO:0007669"/>
    <property type="project" value="UniProtKB-UniRule"/>
</dbReference>
<dbReference type="GO" id="GO:0044209">
    <property type="term" value="P:AMP salvage"/>
    <property type="evidence" value="ECO:0007669"/>
    <property type="project" value="UniProtKB-UniRule"/>
</dbReference>
<dbReference type="CDD" id="cd01428">
    <property type="entry name" value="ADK"/>
    <property type="match status" value="1"/>
</dbReference>
<dbReference type="FunFam" id="3.40.50.300:FF:000106">
    <property type="entry name" value="Adenylate kinase mitochondrial"/>
    <property type="match status" value="1"/>
</dbReference>
<dbReference type="Gene3D" id="3.40.50.300">
    <property type="entry name" value="P-loop containing nucleotide triphosphate hydrolases"/>
    <property type="match status" value="1"/>
</dbReference>
<dbReference type="HAMAP" id="MF_00235">
    <property type="entry name" value="Adenylate_kinase_Adk"/>
    <property type="match status" value="1"/>
</dbReference>
<dbReference type="InterPro" id="IPR006259">
    <property type="entry name" value="Adenyl_kin_sub"/>
</dbReference>
<dbReference type="InterPro" id="IPR000850">
    <property type="entry name" value="Adenylat/UMP-CMP_kin"/>
</dbReference>
<dbReference type="InterPro" id="IPR033690">
    <property type="entry name" value="Adenylat_kinase_CS"/>
</dbReference>
<dbReference type="InterPro" id="IPR007862">
    <property type="entry name" value="Adenylate_kinase_lid-dom"/>
</dbReference>
<dbReference type="InterPro" id="IPR027417">
    <property type="entry name" value="P-loop_NTPase"/>
</dbReference>
<dbReference type="NCBIfam" id="TIGR01351">
    <property type="entry name" value="adk"/>
    <property type="match status" value="1"/>
</dbReference>
<dbReference type="NCBIfam" id="NF001379">
    <property type="entry name" value="PRK00279.1-1"/>
    <property type="match status" value="1"/>
</dbReference>
<dbReference type="NCBIfam" id="NF001380">
    <property type="entry name" value="PRK00279.1-2"/>
    <property type="match status" value="1"/>
</dbReference>
<dbReference type="NCBIfam" id="NF001381">
    <property type="entry name" value="PRK00279.1-3"/>
    <property type="match status" value="1"/>
</dbReference>
<dbReference type="NCBIfam" id="NF011100">
    <property type="entry name" value="PRK14527.1"/>
    <property type="match status" value="1"/>
</dbReference>
<dbReference type="PANTHER" id="PTHR23359">
    <property type="entry name" value="NUCLEOTIDE KINASE"/>
    <property type="match status" value="1"/>
</dbReference>
<dbReference type="Pfam" id="PF00406">
    <property type="entry name" value="ADK"/>
    <property type="match status" value="1"/>
</dbReference>
<dbReference type="Pfam" id="PF05191">
    <property type="entry name" value="ADK_lid"/>
    <property type="match status" value="1"/>
</dbReference>
<dbReference type="PRINTS" id="PR00094">
    <property type="entry name" value="ADENYLTKNASE"/>
</dbReference>
<dbReference type="SUPFAM" id="SSF52540">
    <property type="entry name" value="P-loop containing nucleoside triphosphate hydrolases"/>
    <property type="match status" value="1"/>
</dbReference>
<dbReference type="PROSITE" id="PS00113">
    <property type="entry name" value="ADENYLATE_KINASE"/>
    <property type="match status" value="1"/>
</dbReference>
<evidence type="ECO:0000255" key="1">
    <source>
        <dbReference type="HAMAP-Rule" id="MF_00235"/>
    </source>
</evidence>
<accession>A4XLR0</accession>
<feature type="chain" id="PRO_1000021712" description="Adenylate kinase">
    <location>
        <begin position="1"/>
        <end position="215"/>
    </location>
</feature>
<feature type="region of interest" description="NMP" evidence="1">
    <location>
        <begin position="30"/>
        <end position="59"/>
    </location>
</feature>
<feature type="region of interest" description="LID" evidence="1">
    <location>
        <begin position="126"/>
        <end position="163"/>
    </location>
</feature>
<feature type="binding site" evidence="1">
    <location>
        <begin position="10"/>
        <end position="15"/>
    </location>
    <ligand>
        <name>ATP</name>
        <dbReference type="ChEBI" id="CHEBI:30616"/>
    </ligand>
</feature>
<feature type="binding site" evidence="1">
    <location>
        <position position="31"/>
    </location>
    <ligand>
        <name>AMP</name>
        <dbReference type="ChEBI" id="CHEBI:456215"/>
    </ligand>
</feature>
<feature type="binding site" evidence="1">
    <location>
        <position position="36"/>
    </location>
    <ligand>
        <name>AMP</name>
        <dbReference type="ChEBI" id="CHEBI:456215"/>
    </ligand>
</feature>
<feature type="binding site" evidence="1">
    <location>
        <begin position="57"/>
        <end position="59"/>
    </location>
    <ligand>
        <name>AMP</name>
        <dbReference type="ChEBI" id="CHEBI:456215"/>
    </ligand>
</feature>
<feature type="binding site" evidence="1">
    <location>
        <begin position="85"/>
        <end position="88"/>
    </location>
    <ligand>
        <name>AMP</name>
        <dbReference type="ChEBI" id="CHEBI:456215"/>
    </ligand>
</feature>
<feature type="binding site" evidence="1">
    <location>
        <position position="92"/>
    </location>
    <ligand>
        <name>AMP</name>
        <dbReference type="ChEBI" id="CHEBI:456215"/>
    </ligand>
</feature>
<feature type="binding site" evidence="1">
    <location>
        <position position="127"/>
    </location>
    <ligand>
        <name>ATP</name>
        <dbReference type="ChEBI" id="CHEBI:30616"/>
    </ligand>
</feature>
<feature type="binding site" evidence="1">
    <location>
        <position position="130"/>
    </location>
    <ligand>
        <name>Zn(2+)</name>
        <dbReference type="ChEBI" id="CHEBI:29105"/>
        <note>structural</note>
    </ligand>
</feature>
<feature type="binding site" evidence="1">
    <location>
        <position position="133"/>
    </location>
    <ligand>
        <name>Zn(2+)</name>
        <dbReference type="ChEBI" id="CHEBI:29105"/>
        <note>structural</note>
    </ligand>
</feature>
<feature type="binding site" evidence="1">
    <location>
        <begin position="136"/>
        <end position="137"/>
    </location>
    <ligand>
        <name>ATP</name>
        <dbReference type="ChEBI" id="CHEBI:30616"/>
    </ligand>
</feature>
<feature type="binding site" evidence="1">
    <location>
        <position position="150"/>
    </location>
    <ligand>
        <name>Zn(2+)</name>
        <dbReference type="ChEBI" id="CHEBI:29105"/>
        <note>structural</note>
    </ligand>
</feature>
<feature type="binding site" evidence="1">
    <location>
        <position position="153"/>
    </location>
    <ligand>
        <name>Zn(2+)</name>
        <dbReference type="ChEBI" id="CHEBI:29105"/>
        <note>structural</note>
    </ligand>
</feature>
<feature type="binding site" evidence="1">
    <location>
        <position position="160"/>
    </location>
    <ligand>
        <name>AMP</name>
        <dbReference type="ChEBI" id="CHEBI:456215"/>
    </ligand>
</feature>
<feature type="binding site" evidence="1">
    <location>
        <position position="171"/>
    </location>
    <ligand>
        <name>AMP</name>
        <dbReference type="ChEBI" id="CHEBI:456215"/>
    </ligand>
</feature>
<feature type="binding site" evidence="1">
    <location>
        <position position="199"/>
    </location>
    <ligand>
        <name>ATP</name>
        <dbReference type="ChEBI" id="CHEBI:30616"/>
    </ligand>
</feature>
<proteinExistence type="inferred from homology"/>
<organism>
    <name type="scientific">Caldicellulosiruptor saccharolyticus (strain ATCC 43494 / DSM 8903 / Tp8T 6331)</name>
    <dbReference type="NCBI Taxonomy" id="351627"/>
    <lineage>
        <taxon>Bacteria</taxon>
        <taxon>Bacillati</taxon>
        <taxon>Bacillota</taxon>
        <taxon>Bacillota incertae sedis</taxon>
        <taxon>Caldicellulosiruptorales</taxon>
        <taxon>Caldicellulosiruptoraceae</taxon>
        <taxon>Caldicellulosiruptor</taxon>
    </lineage>
</organism>